<gene>
    <name evidence="1" type="primary">nuoH</name>
    <name type="ordered locus">Mlg_1963</name>
</gene>
<name>NUOH_ALKEH</name>
<accession>Q0A782</accession>
<sequence length="339" mass="37603">MAVFTELFWITLKIMALVVPLMLAVAYLTYAERRVIGAMQDRRGPNRVGYQGLLQPIADALKLVMKEISIPSNANRVLFVIAPLLAIMPALAAWAVIPVAEGWAIADINAGLLYILAMTSLGVYGIIIAGWASNSKYALLGTLRASAQVVSYEIAMGFALVGVLMAAGSMNLGQIIQAQAGGIFHWFWLPLLPLFLVYWISGVAETNRAPFDVAEGESEIVAGFHVEYSGTSFAVFFLAEYANMILISAVAAVMFLGGWYSPFHGWPILGPMLDWVPGVVWFMLKTAFFMFCYLWFRATFPRYRYDQIMRLGWKVLIPVTVVWLIVLTIFIVTGFGPWF</sequence>
<keyword id="KW-0997">Cell inner membrane</keyword>
<keyword id="KW-1003">Cell membrane</keyword>
<keyword id="KW-0472">Membrane</keyword>
<keyword id="KW-0520">NAD</keyword>
<keyword id="KW-0874">Quinone</keyword>
<keyword id="KW-1185">Reference proteome</keyword>
<keyword id="KW-1278">Translocase</keyword>
<keyword id="KW-0812">Transmembrane</keyword>
<keyword id="KW-1133">Transmembrane helix</keyword>
<keyword id="KW-0830">Ubiquinone</keyword>
<comment type="function">
    <text evidence="1">NDH-1 shuttles electrons from NADH, via FMN and iron-sulfur (Fe-S) centers, to quinones in the respiratory chain. The immediate electron acceptor for the enzyme in this species is believed to be ubiquinone. Couples the redox reaction to proton translocation (for every two electrons transferred, four hydrogen ions are translocated across the cytoplasmic membrane), and thus conserves the redox energy in a proton gradient. This subunit may bind ubiquinone.</text>
</comment>
<comment type="catalytic activity">
    <reaction evidence="1">
        <text>a quinone + NADH + 5 H(+)(in) = a quinol + NAD(+) + 4 H(+)(out)</text>
        <dbReference type="Rhea" id="RHEA:57888"/>
        <dbReference type="ChEBI" id="CHEBI:15378"/>
        <dbReference type="ChEBI" id="CHEBI:24646"/>
        <dbReference type="ChEBI" id="CHEBI:57540"/>
        <dbReference type="ChEBI" id="CHEBI:57945"/>
        <dbReference type="ChEBI" id="CHEBI:132124"/>
    </reaction>
</comment>
<comment type="subunit">
    <text evidence="1">NDH-1 is composed of 14 different subunits. Subunits NuoA, H, J, K, L, M, N constitute the membrane sector of the complex.</text>
</comment>
<comment type="subcellular location">
    <subcellularLocation>
        <location evidence="1">Cell inner membrane</location>
        <topology evidence="1">Multi-pass membrane protein</topology>
    </subcellularLocation>
</comment>
<comment type="similarity">
    <text evidence="1">Belongs to the complex I subunit 1 family.</text>
</comment>
<feature type="chain" id="PRO_0000298791" description="NADH-quinone oxidoreductase subunit H">
    <location>
        <begin position="1"/>
        <end position="339"/>
    </location>
</feature>
<feature type="transmembrane region" description="Helical" evidence="1">
    <location>
        <begin position="7"/>
        <end position="27"/>
    </location>
</feature>
<feature type="transmembrane region" description="Helical" evidence="1">
    <location>
        <begin position="77"/>
        <end position="97"/>
    </location>
</feature>
<feature type="transmembrane region" description="Helical" evidence="1">
    <location>
        <begin position="112"/>
        <end position="132"/>
    </location>
</feature>
<feature type="transmembrane region" description="Helical" evidence="1">
    <location>
        <begin position="149"/>
        <end position="169"/>
    </location>
</feature>
<feature type="transmembrane region" description="Helical" evidence="1">
    <location>
        <begin position="180"/>
        <end position="200"/>
    </location>
</feature>
<feature type="transmembrane region" description="Helical" evidence="1">
    <location>
        <begin position="235"/>
        <end position="255"/>
    </location>
</feature>
<feature type="transmembrane region" description="Helical" evidence="1">
    <location>
        <begin position="276"/>
        <end position="296"/>
    </location>
</feature>
<feature type="transmembrane region" description="Helical" evidence="1">
    <location>
        <begin position="315"/>
        <end position="335"/>
    </location>
</feature>
<organism>
    <name type="scientific">Alkalilimnicola ehrlichii (strain ATCC BAA-1101 / DSM 17681 / MLHE-1)</name>
    <dbReference type="NCBI Taxonomy" id="187272"/>
    <lineage>
        <taxon>Bacteria</taxon>
        <taxon>Pseudomonadati</taxon>
        <taxon>Pseudomonadota</taxon>
        <taxon>Gammaproteobacteria</taxon>
        <taxon>Chromatiales</taxon>
        <taxon>Ectothiorhodospiraceae</taxon>
        <taxon>Alkalilimnicola</taxon>
    </lineage>
</organism>
<reference key="1">
    <citation type="submission" date="2006-08" db="EMBL/GenBank/DDBJ databases">
        <title>Complete sequence of Alkalilimnicola ehrilichei MLHE-1.</title>
        <authorList>
            <person name="Copeland A."/>
            <person name="Lucas S."/>
            <person name="Lapidus A."/>
            <person name="Barry K."/>
            <person name="Detter J.C."/>
            <person name="Glavina del Rio T."/>
            <person name="Hammon N."/>
            <person name="Israni S."/>
            <person name="Dalin E."/>
            <person name="Tice H."/>
            <person name="Pitluck S."/>
            <person name="Sims D."/>
            <person name="Brettin T."/>
            <person name="Bruce D."/>
            <person name="Han C."/>
            <person name="Tapia R."/>
            <person name="Gilna P."/>
            <person name="Schmutz J."/>
            <person name="Larimer F."/>
            <person name="Land M."/>
            <person name="Hauser L."/>
            <person name="Kyrpides N."/>
            <person name="Mikhailova N."/>
            <person name="Oremland R.S."/>
            <person name="Hoeft S.E."/>
            <person name="Switzer-Blum J."/>
            <person name="Kulp T."/>
            <person name="King G."/>
            <person name="Tabita R."/>
            <person name="Witte B."/>
            <person name="Santini J.M."/>
            <person name="Basu P."/>
            <person name="Hollibaugh J.T."/>
            <person name="Xie G."/>
            <person name="Stolz J.F."/>
            <person name="Richardson P."/>
        </authorList>
    </citation>
    <scope>NUCLEOTIDE SEQUENCE [LARGE SCALE GENOMIC DNA]</scope>
    <source>
        <strain>ATCC BAA-1101 / DSM 17681 / MLHE-1</strain>
    </source>
</reference>
<proteinExistence type="inferred from homology"/>
<evidence type="ECO:0000255" key="1">
    <source>
        <dbReference type="HAMAP-Rule" id="MF_01350"/>
    </source>
</evidence>
<dbReference type="EC" id="7.1.1.-" evidence="1"/>
<dbReference type="EMBL" id="CP000453">
    <property type="protein sequence ID" value="ABI57305.1"/>
    <property type="molecule type" value="Genomic_DNA"/>
</dbReference>
<dbReference type="RefSeq" id="WP_011629699.1">
    <property type="nucleotide sequence ID" value="NC_008340.1"/>
</dbReference>
<dbReference type="SMR" id="Q0A782"/>
<dbReference type="KEGG" id="aeh:Mlg_1963"/>
<dbReference type="eggNOG" id="COG1005">
    <property type="taxonomic scope" value="Bacteria"/>
</dbReference>
<dbReference type="HOGENOM" id="CLU_015134_0_1_6"/>
<dbReference type="OrthoDB" id="9803734at2"/>
<dbReference type="Proteomes" id="UP000001962">
    <property type="component" value="Chromosome"/>
</dbReference>
<dbReference type="GO" id="GO:0005886">
    <property type="term" value="C:plasma membrane"/>
    <property type="evidence" value="ECO:0007669"/>
    <property type="project" value="UniProtKB-SubCell"/>
</dbReference>
<dbReference type="GO" id="GO:0003954">
    <property type="term" value="F:NADH dehydrogenase activity"/>
    <property type="evidence" value="ECO:0007669"/>
    <property type="project" value="TreeGrafter"/>
</dbReference>
<dbReference type="GO" id="GO:0016655">
    <property type="term" value="F:oxidoreductase activity, acting on NAD(P)H, quinone or similar compound as acceptor"/>
    <property type="evidence" value="ECO:0007669"/>
    <property type="project" value="UniProtKB-UniRule"/>
</dbReference>
<dbReference type="GO" id="GO:0048038">
    <property type="term" value="F:quinone binding"/>
    <property type="evidence" value="ECO:0007669"/>
    <property type="project" value="UniProtKB-KW"/>
</dbReference>
<dbReference type="GO" id="GO:0009060">
    <property type="term" value="P:aerobic respiration"/>
    <property type="evidence" value="ECO:0007669"/>
    <property type="project" value="TreeGrafter"/>
</dbReference>
<dbReference type="HAMAP" id="MF_01350">
    <property type="entry name" value="NDH1_NuoH"/>
    <property type="match status" value="1"/>
</dbReference>
<dbReference type="InterPro" id="IPR001694">
    <property type="entry name" value="NADH_UbQ_OxRdtase_su1/FPO"/>
</dbReference>
<dbReference type="InterPro" id="IPR018086">
    <property type="entry name" value="NADH_UbQ_OxRdtase_su1_CS"/>
</dbReference>
<dbReference type="NCBIfam" id="NF004741">
    <property type="entry name" value="PRK06076.1-2"/>
    <property type="match status" value="1"/>
</dbReference>
<dbReference type="PANTHER" id="PTHR11432">
    <property type="entry name" value="NADH DEHYDROGENASE SUBUNIT 1"/>
    <property type="match status" value="1"/>
</dbReference>
<dbReference type="PANTHER" id="PTHR11432:SF3">
    <property type="entry name" value="NADH-UBIQUINONE OXIDOREDUCTASE CHAIN 1"/>
    <property type="match status" value="1"/>
</dbReference>
<dbReference type="Pfam" id="PF00146">
    <property type="entry name" value="NADHdh"/>
    <property type="match status" value="1"/>
</dbReference>
<dbReference type="PROSITE" id="PS00667">
    <property type="entry name" value="COMPLEX1_ND1_1"/>
    <property type="match status" value="1"/>
</dbReference>
<dbReference type="PROSITE" id="PS00668">
    <property type="entry name" value="COMPLEX1_ND1_2"/>
    <property type="match status" value="1"/>
</dbReference>
<protein>
    <recommendedName>
        <fullName evidence="1">NADH-quinone oxidoreductase subunit H</fullName>
        <ecNumber evidence="1">7.1.1.-</ecNumber>
    </recommendedName>
    <alternativeName>
        <fullName evidence="1">NADH dehydrogenase I subunit H</fullName>
    </alternativeName>
    <alternativeName>
        <fullName evidence="1">NDH-1 subunit H</fullName>
    </alternativeName>
</protein>